<name>CHEB_METBF</name>
<protein>
    <recommendedName>
        <fullName evidence="1">Protein-glutamate methylesterase/protein-glutamine glutaminase</fullName>
        <ecNumber evidence="1">3.1.1.61</ecNumber>
        <ecNumber evidence="1">3.5.1.44</ecNumber>
    </recommendedName>
</protein>
<dbReference type="EC" id="3.1.1.61" evidence="1"/>
<dbReference type="EC" id="3.5.1.44" evidence="1"/>
<dbReference type="EMBL" id="CP000099">
    <property type="protein sequence ID" value="AAZ69956.1"/>
    <property type="molecule type" value="Genomic_DNA"/>
</dbReference>
<dbReference type="SMR" id="Q46DT6"/>
<dbReference type="STRING" id="269797.Mbar_A0985"/>
<dbReference type="PaxDb" id="269797-Mbar_A0985"/>
<dbReference type="KEGG" id="mba:Mbar_A0985"/>
<dbReference type="eggNOG" id="arCOG02382">
    <property type="taxonomic scope" value="Archaea"/>
</dbReference>
<dbReference type="HOGENOM" id="CLU_000445_51_0_2"/>
<dbReference type="GO" id="GO:0005737">
    <property type="term" value="C:cytoplasm"/>
    <property type="evidence" value="ECO:0007669"/>
    <property type="project" value="UniProtKB-SubCell"/>
</dbReference>
<dbReference type="GO" id="GO:0000156">
    <property type="term" value="F:phosphorelay response regulator activity"/>
    <property type="evidence" value="ECO:0007669"/>
    <property type="project" value="InterPro"/>
</dbReference>
<dbReference type="GO" id="GO:0008984">
    <property type="term" value="F:protein-glutamate methylesterase activity"/>
    <property type="evidence" value="ECO:0007669"/>
    <property type="project" value="UniProtKB-UniRule"/>
</dbReference>
<dbReference type="GO" id="GO:0050568">
    <property type="term" value="F:protein-glutamine glutaminase activity"/>
    <property type="evidence" value="ECO:0007669"/>
    <property type="project" value="UniProtKB-UniRule"/>
</dbReference>
<dbReference type="GO" id="GO:0006935">
    <property type="term" value="P:chemotaxis"/>
    <property type="evidence" value="ECO:0007669"/>
    <property type="project" value="UniProtKB-UniRule"/>
</dbReference>
<dbReference type="CDD" id="cd16432">
    <property type="entry name" value="CheB_Rec"/>
    <property type="match status" value="1"/>
</dbReference>
<dbReference type="CDD" id="cd17541">
    <property type="entry name" value="REC_CheB-like"/>
    <property type="match status" value="1"/>
</dbReference>
<dbReference type="Gene3D" id="3.40.50.2300">
    <property type="match status" value="1"/>
</dbReference>
<dbReference type="Gene3D" id="3.40.50.180">
    <property type="entry name" value="Methylesterase CheB, C-terminal domain"/>
    <property type="match status" value="1"/>
</dbReference>
<dbReference type="HAMAP" id="MF_00099">
    <property type="entry name" value="CheB_chemtxs"/>
    <property type="match status" value="1"/>
</dbReference>
<dbReference type="InterPro" id="IPR008248">
    <property type="entry name" value="CheB-like"/>
</dbReference>
<dbReference type="InterPro" id="IPR035909">
    <property type="entry name" value="CheB_C"/>
</dbReference>
<dbReference type="InterPro" id="IPR011006">
    <property type="entry name" value="CheY-like_superfamily"/>
</dbReference>
<dbReference type="InterPro" id="IPR000673">
    <property type="entry name" value="Sig_transdc_resp-reg_Me-estase"/>
</dbReference>
<dbReference type="InterPro" id="IPR001789">
    <property type="entry name" value="Sig_transdc_resp-reg_receiver"/>
</dbReference>
<dbReference type="NCBIfam" id="NF001965">
    <property type="entry name" value="PRK00742.1"/>
    <property type="match status" value="1"/>
</dbReference>
<dbReference type="PANTHER" id="PTHR42872">
    <property type="entry name" value="PROTEIN-GLUTAMATE METHYLESTERASE/PROTEIN-GLUTAMINE GLUTAMINASE"/>
    <property type="match status" value="1"/>
</dbReference>
<dbReference type="PANTHER" id="PTHR42872:SF6">
    <property type="entry name" value="PROTEIN-GLUTAMATE METHYLESTERASE_PROTEIN-GLUTAMINE GLUTAMINASE"/>
    <property type="match status" value="1"/>
</dbReference>
<dbReference type="Pfam" id="PF01339">
    <property type="entry name" value="CheB_methylest"/>
    <property type="match status" value="1"/>
</dbReference>
<dbReference type="Pfam" id="PF00072">
    <property type="entry name" value="Response_reg"/>
    <property type="match status" value="1"/>
</dbReference>
<dbReference type="PIRSF" id="PIRSF000876">
    <property type="entry name" value="RR_chemtxs_CheB"/>
    <property type="match status" value="1"/>
</dbReference>
<dbReference type="SMART" id="SM00448">
    <property type="entry name" value="REC"/>
    <property type="match status" value="1"/>
</dbReference>
<dbReference type="SUPFAM" id="SSF52172">
    <property type="entry name" value="CheY-like"/>
    <property type="match status" value="1"/>
</dbReference>
<dbReference type="SUPFAM" id="SSF52738">
    <property type="entry name" value="Methylesterase CheB, C-terminal domain"/>
    <property type="match status" value="1"/>
</dbReference>
<dbReference type="PROSITE" id="PS50122">
    <property type="entry name" value="CHEB"/>
    <property type="match status" value="1"/>
</dbReference>
<dbReference type="PROSITE" id="PS50110">
    <property type="entry name" value="RESPONSE_REGULATORY"/>
    <property type="match status" value="1"/>
</dbReference>
<comment type="function">
    <text evidence="1">Involved in chemotaxis. Part of a chemotaxis signal transduction system that modulates chemotaxis in response to various stimuli. Catalyzes the demethylation of specific methylglutamate residues introduced into the chemoreceptors (methyl-accepting chemotaxis proteins or MCP) by CheR. Also mediates the irreversible deamidation of specific glutamine residues to glutamic acid.</text>
</comment>
<comment type="catalytic activity">
    <reaction evidence="1">
        <text>[protein]-L-glutamate 5-O-methyl ester + H2O = L-glutamyl-[protein] + methanol + H(+)</text>
        <dbReference type="Rhea" id="RHEA:23236"/>
        <dbReference type="Rhea" id="RHEA-COMP:10208"/>
        <dbReference type="Rhea" id="RHEA-COMP:10311"/>
        <dbReference type="ChEBI" id="CHEBI:15377"/>
        <dbReference type="ChEBI" id="CHEBI:15378"/>
        <dbReference type="ChEBI" id="CHEBI:17790"/>
        <dbReference type="ChEBI" id="CHEBI:29973"/>
        <dbReference type="ChEBI" id="CHEBI:82795"/>
        <dbReference type="EC" id="3.1.1.61"/>
    </reaction>
</comment>
<comment type="catalytic activity">
    <reaction evidence="1">
        <text>L-glutaminyl-[protein] + H2O = L-glutamyl-[protein] + NH4(+)</text>
        <dbReference type="Rhea" id="RHEA:16441"/>
        <dbReference type="Rhea" id="RHEA-COMP:10207"/>
        <dbReference type="Rhea" id="RHEA-COMP:10208"/>
        <dbReference type="ChEBI" id="CHEBI:15377"/>
        <dbReference type="ChEBI" id="CHEBI:28938"/>
        <dbReference type="ChEBI" id="CHEBI:29973"/>
        <dbReference type="ChEBI" id="CHEBI:30011"/>
        <dbReference type="EC" id="3.5.1.44"/>
    </reaction>
</comment>
<comment type="subcellular location">
    <subcellularLocation>
        <location evidence="1">Cytoplasm</location>
    </subcellularLocation>
</comment>
<comment type="domain">
    <text evidence="1">Contains a C-terminal catalytic domain, and an N-terminal region which modulates catalytic activity.</text>
</comment>
<comment type="PTM">
    <text evidence="1">Phosphorylated by CheA. Phosphorylation of the N-terminal regulatory domain activates the methylesterase activity.</text>
</comment>
<comment type="similarity">
    <text evidence="1">Belongs to the CheB family.</text>
</comment>
<accession>Q46DT6</accession>
<reference key="1">
    <citation type="journal article" date="2006" name="J. Bacteriol.">
        <title>The Methanosarcina barkeri genome: comparative analysis with Methanosarcina acetivorans and Methanosarcina mazei reveals extensive rearrangement within methanosarcinal genomes.</title>
        <authorList>
            <person name="Maeder D.L."/>
            <person name="Anderson I."/>
            <person name="Brettin T.S."/>
            <person name="Bruce D.C."/>
            <person name="Gilna P."/>
            <person name="Han C.S."/>
            <person name="Lapidus A."/>
            <person name="Metcalf W.W."/>
            <person name="Saunders E."/>
            <person name="Tapia R."/>
            <person name="Sowers K.R."/>
        </authorList>
    </citation>
    <scope>NUCLEOTIDE SEQUENCE [LARGE SCALE GENOMIC DNA]</scope>
    <source>
        <strain>Fusaro / DSM 804</strain>
    </source>
</reference>
<feature type="chain" id="PRO_0000225497" description="Protein-glutamate methylesterase/protein-glutamine glutaminase">
    <location>
        <begin position="1"/>
        <end position="364"/>
    </location>
</feature>
<feature type="domain" description="Response regulatory" evidence="1">
    <location>
        <begin position="7"/>
        <end position="124"/>
    </location>
</feature>
<feature type="domain" description="CheB-type methylesterase" evidence="1">
    <location>
        <begin position="167"/>
        <end position="364"/>
    </location>
</feature>
<feature type="active site" evidence="1">
    <location>
        <position position="181"/>
    </location>
</feature>
<feature type="active site" evidence="1">
    <location>
        <position position="208"/>
    </location>
</feature>
<feature type="active site" evidence="1">
    <location>
        <position position="308"/>
    </location>
</feature>
<feature type="modified residue" description="4-aspartylphosphate" evidence="1">
    <location>
        <position position="58"/>
    </location>
</feature>
<sequence>MLEMTIRALIVDDSALIRKLLSDILSQDPNLRIIGTAFNGKDGLEKIKKLRPDVVLLDNIMPVFDGLKTLAWIVKECPTPVVMISAFGERAEEITLTAFEYGAVDVIQRPEGILSQNMPDMAEEICRKTRAATKANLENLECMRNRELEETDINKREKIEKHRSRKETTSFVRNVLAIGASTGGPRALEKLIGSFPADIPAAVLIVQHMPAGFTASFSKRLDSKTALRVKEAEEGDIIEEGTVLIAPGNHHMEIVQKTVKGRKEEVAHLSCSPKELGSRPSVNALFRSIAPIYGSKIVSLVLTGMNCDGADGAEQVKKMGGKIIAEAQSSCVVYGMPKEVVRRKLADFVLPLDKMAEEIVKIIS</sequence>
<organism>
    <name type="scientific">Methanosarcina barkeri (strain Fusaro / DSM 804)</name>
    <dbReference type="NCBI Taxonomy" id="269797"/>
    <lineage>
        <taxon>Archaea</taxon>
        <taxon>Methanobacteriati</taxon>
        <taxon>Methanobacteriota</taxon>
        <taxon>Stenosarchaea group</taxon>
        <taxon>Methanomicrobia</taxon>
        <taxon>Methanosarcinales</taxon>
        <taxon>Methanosarcinaceae</taxon>
        <taxon>Methanosarcina</taxon>
    </lineage>
</organism>
<evidence type="ECO:0000255" key="1">
    <source>
        <dbReference type="HAMAP-Rule" id="MF_00099"/>
    </source>
</evidence>
<gene>
    <name evidence="1" type="primary">cheB</name>
    <name type="ordered locus">Mbar_A0985</name>
</gene>
<keyword id="KW-0145">Chemotaxis</keyword>
<keyword id="KW-0963">Cytoplasm</keyword>
<keyword id="KW-0378">Hydrolase</keyword>
<keyword id="KW-0597">Phosphoprotein</keyword>
<proteinExistence type="inferred from homology"/>